<dbReference type="EC" id="2.4.2.57" evidence="1"/>
<dbReference type="EMBL" id="CP000505">
    <property type="protein sequence ID" value="ABL77503.1"/>
    <property type="status" value="ALT_INIT"/>
    <property type="molecule type" value="Genomic_DNA"/>
</dbReference>
<dbReference type="RefSeq" id="WP_187146335.1">
    <property type="nucleotide sequence ID" value="NC_008698.1"/>
</dbReference>
<dbReference type="SMR" id="A1RWC3"/>
<dbReference type="STRING" id="368408.Tpen_0093"/>
<dbReference type="EnsemblBacteria" id="ABL77503">
    <property type="protein sequence ID" value="ABL77503"/>
    <property type="gene ID" value="Tpen_0093"/>
</dbReference>
<dbReference type="GeneID" id="4601385"/>
<dbReference type="KEGG" id="tpe:Tpen_0093"/>
<dbReference type="eggNOG" id="arCOG02013">
    <property type="taxonomic scope" value="Archaea"/>
</dbReference>
<dbReference type="HOGENOM" id="CLU_025040_6_0_2"/>
<dbReference type="OrthoDB" id="9827at2157"/>
<dbReference type="Proteomes" id="UP000000641">
    <property type="component" value="Chromosome"/>
</dbReference>
<dbReference type="GO" id="GO:0005829">
    <property type="term" value="C:cytosol"/>
    <property type="evidence" value="ECO:0007669"/>
    <property type="project" value="TreeGrafter"/>
</dbReference>
<dbReference type="GO" id="GO:0004645">
    <property type="term" value="F:1,4-alpha-oligoglucan phosphorylase activity"/>
    <property type="evidence" value="ECO:0007669"/>
    <property type="project" value="InterPro"/>
</dbReference>
<dbReference type="GO" id="GO:0016208">
    <property type="term" value="F:AMP binding"/>
    <property type="evidence" value="ECO:0007669"/>
    <property type="project" value="UniProtKB-UniRule"/>
</dbReference>
<dbReference type="GO" id="GO:0016763">
    <property type="term" value="F:pentosyltransferase activity"/>
    <property type="evidence" value="ECO:0007669"/>
    <property type="project" value="UniProtKB-UniRule"/>
</dbReference>
<dbReference type="GO" id="GO:0006196">
    <property type="term" value="P:AMP catabolic process"/>
    <property type="evidence" value="ECO:0007669"/>
    <property type="project" value="UniProtKB-UniRule"/>
</dbReference>
<dbReference type="GO" id="GO:0046125">
    <property type="term" value="P:pyrimidine deoxyribonucleoside metabolic process"/>
    <property type="evidence" value="ECO:0007669"/>
    <property type="project" value="InterPro"/>
</dbReference>
<dbReference type="GO" id="GO:0006206">
    <property type="term" value="P:pyrimidine nucleobase metabolic process"/>
    <property type="evidence" value="ECO:0007669"/>
    <property type="project" value="InterPro"/>
</dbReference>
<dbReference type="Gene3D" id="1.20.970.50">
    <property type="match status" value="1"/>
</dbReference>
<dbReference type="Gene3D" id="2.40.40.20">
    <property type="match status" value="1"/>
</dbReference>
<dbReference type="Gene3D" id="3.40.1030.10">
    <property type="entry name" value="Nucleoside phosphorylase/phosphoribosyltransferase catalytic domain"/>
    <property type="match status" value="1"/>
</dbReference>
<dbReference type="Gene3D" id="3.90.1170.30">
    <property type="entry name" value="Pyrimidine nucleoside phosphorylase-like, C-terminal domain"/>
    <property type="match status" value="1"/>
</dbReference>
<dbReference type="HAMAP" id="MF_02132">
    <property type="entry name" value="AMP_phosphorylase"/>
    <property type="match status" value="1"/>
</dbReference>
<dbReference type="InterPro" id="IPR017713">
    <property type="entry name" value="AMP_phosphorylase"/>
</dbReference>
<dbReference type="InterPro" id="IPR000312">
    <property type="entry name" value="Glycosyl_Trfase_fam3"/>
</dbReference>
<dbReference type="InterPro" id="IPR017459">
    <property type="entry name" value="Glycosyl_Trfase_fam3_N_dom"/>
</dbReference>
<dbReference type="InterPro" id="IPR036320">
    <property type="entry name" value="Glycosyl_Trfase_fam3_N_dom_sf"/>
</dbReference>
<dbReference type="InterPro" id="IPR035902">
    <property type="entry name" value="Nuc_phospho_transferase"/>
</dbReference>
<dbReference type="InterPro" id="IPR036566">
    <property type="entry name" value="PYNP-like_C_sf"/>
</dbReference>
<dbReference type="InterPro" id="IPR013102">
    <property type="entry name" value="PYNP_C"/>
</dbReference>
<dbReference type="InterPro" id="IPR017872">
    <property type="entry name" value="Pyrmidine_PPase_CS"/>
</dbReference>
<dbReference type="InterPro" id="IPR013466">
    <property type="entry name" value="Thymidine/AMP_Pase"/>
</dbReference>
<dbReference type="InterPro" id="IPR000053">
    <property type="entry name" value="Thymidine/pyrmidine_PPase"/>
</dbReference>
<dbReference type="NCBIfam" id="TIGR03327">
    <property type="entry name" value="AMP_phos"/>
    <property type="match status" value="1"/>
</dbReference>
<dbReference type="NCBIfam" id="TIGR02645">
    <property type="entry name" value="ARCH_P_rylase"/>
    <property type="match status" value="1"/>
</dbReference>
<dbReference type="NCBIfam" id="NF003338">
    <property type="entry name" value="PRK04350.1"/>
    <property type="match status" value="1"/>
</dbReference>
<dbReference type="PANTHER" id="PTHR10515">
    <property type="entry name" value="THYMIDINE PHOSPHORYLASE"/>
    <property type="match status" value="1"/>
</dbReference>
<dbReference type="PANTHER" id="PTHR10515:SF0">
    <property type="entry name" value="THYMIDINE PHOSPHORYLASE"/>
    <property type="match status" value="1"/>
</dbReference>
<dbReference type="Pfam" id="PF02885">
    <property type="entry name" value="Glycos_trans_3N"/>
    <property type="match status" value="1"/>
</dbReference>
<dbReference type="Pfam" id="PF00591">
    <property type="entry name" value="Glycos_transf_3"/>
    <property type="match status" value="1"/>
</dbReference>
<dbReference type="Pfam" id="PF07831">
    <property type="entry name" value="PYNP_C"/>
    <property type="match status" value="1"/>
</dbReference>
<dbReference type="SMART" id="SM00941">
    <property type="entry name" value="PYNP_C"/>
    <property type="match status" value="1"/>
</dbReference>
<dbReference type="SUPFAM" id="SSF52418">
    <property type="entry name" value="Nucleoside phosphorylase/phosphoribosyltransferase catalytic domain"/>
    <property type="match status" value="1"/>
</dbReference>
<dbReference type="SUPFAM" id="SSF47648">
    <property type="entry name" value="Nucleoside phosphorylase/phosphoribosyltransferase N-terminal domain"/>
    <property type="match status" value="1"/>
</dbReference>
<dbReference type="SUPFAM" id="SSF54680">
    <property type="entry name" value="Pyrimidine nucleoside phosphorylase C-terminal domain"/>
    <property type="match status" value="1"/>
</dbReference>
<dbReference type="PROSITE" id="PS00647">
    <property type="entry name" value="THYMID_PHOSPHORYLASE"/>
    <property type="match status" value="1"/>
</dbReference>
<gene>
    <name type="ordered locus">Tpen_0093</name>
</gene>
<keyword id="KW-0328">Glycosyltransferase</keyword>
<keyword id="KW-1185">Reference proteome</keyword>
<keyword id="KW-0808">Transferase</keyword>
<feature type="chain" id="PRO_0000314732" description="AMP phosphorylase">
    <location>
        <begin position="1"/>
        <end position="511"/>
    </location>
</feature>
<feature type="active site" description="Proton donor" evidence="1">
    <location>
        <position position="256"/>
    </location>
</feature>
<feature type="binding site" evidence="1">
    <location>
        <position position="168"/>
    </location>
    <ligand>
        <name>AMP</name>
        <dbReference type="ChEBI" id="CHEBI:456215"/>
    </ligand>
</feature>
<feature type="binding site" evidence="1">
    <location>
        <begin position="194"/>
        <end position="199"/>
    </location>
    <ligand>
        <name>AMP</name>
        <dbReference type="ChEBI" id="CHEBI:456215"/>
    </ligand>
</feature>
<feature type="binding site" evidence="1">
    <location>
        <position position="203"/>
    </location>
    <ligand>
        <name>AMP</name>
        <dbReference type="ChEBI" id="CHEBI:456215"/>
    </ligand>
</feature>
<feature type="binding site" evidence="1">
    <location>
        <position position="262"/>
    </location>
    <ligand>
        <name>AMP</name>
        <dbReference type="ChEBI" id="CHEBI:456215"/>
    </ligand>
</feature>
<feature type="binding site" evidence="1">
    <location>
        <position position="286"/>
    </location>
    <ligand>
        <name>AMP</name>
        <dbReference type="ChEBI" id="CHEBI:456215"/>
    </ligand>
</feature>
<sequence>MKLKTRILPFESAHYTVVLDQSVAKKLDVRPSDRVLVRFNGKTVVAIANIAKEFSHEHVGVYVNIAKALGISDGDEVEVEATSPPASLQAIRKKLQGLSLESDEIYQVVKDIVDGKLSELELAAFVTAVHFQGMTPSEIYSFTLSMVETGQRLRLKRKPILDKHSLGGVPGDKTSLLVVPIIASLGFTIPKTSSRAITSAAGTADRMEVLAPVNLSIDEIERIVEKTNACLVWGGALNLAPADDIIIRVEYPLGIDPFYIPSILAKKLAVGSTHVVLDVPTGRGTKVKTLEEAKRISQSFFEIARMFGMNLQAVATYAEEPIGHAIGPALEAREALIALRELRPGDLVDKAASLAGTLLEMVGVENGYETAMEALRTGKAEKKLREIIEAQGGDPDVTPEEIPLGDKTYTLYSEEDGFVYYIDNSLLANIGKIAGAPIDKGAGVYIHVKLGEKVRKGDPLLTVYSSSSAKLQAVERILEDSKPVLVGRTAGRRMLLERIQYQPPRQLVLER</sequence>
<reference key="1">
    <citation type="journal article" date="2008" name="J. Bacteriol.">
        <title>Genome sequence of Thermofilum pendens reveals an exceptional loss of biosynthetic pathways without genome reduction.</title>
        <authorList>
            <person name="Anderson I."/>
            <person name="Rodriguez J."/>
            <person name="Susanti D."/>
            <person name="Porat I."/>
            <person name="Reich C."/>
            <person name="Ulrich L.E."/>
            <person name="Elkins J.G."/>
            <person name="Mavromatis K."/>
            <person name="Lykidis A."/>
            <person name="Kim E."/>
            <person name="Thompson L.S."/>
            <person name="Nolan M."/>
            <person name="Land M."/>
            <person name="Copeland A."/>
            <person name="Lapidus A."/>
            <person name="Lucas S."/>
            <person name="Detter C."/>
            <person name="Zhulin I.B."/>
            <person name="Olsen G.J."/>
            <person name="Whitman W."/>
            <person name="Mukhopadhyay B."/>
            <person name="Bristow J."/>
            <person name="Kyrpides N."/>
        </authorList>
    </citation>
    <scope>NUCLEOTIDE SEQUENCE [LARGE SCALE GENOMIC DNA]</scope>
    <source>
        <strain>DSM 2475 / Hrk 5</strain>
    </source>
</reference>
<proteinExistence type="inferred from homology"/>
<comment type="function">
    <text evidence="1">Catalyzes the conversion of AMP and phosphate to adenine and ribose 1,5-bisphosphate (R15P). Exhibits phosphorylase activity toward CMP and UMP in addition to AMP. Functions in an archaeal AMP degradation pathway, together with R15P isomerase and RubisCO.</text>
</comment>
<comment type="catalytic activity">
    <reaction evidence="1">
        <text>AMP + phosphate = alpha-D-ribose 1,5-bisphosphate + adenine</text>
        <dbReference type="Rhea" id="RHEA:36975"/>
        <dbReference type="ChEBI" id="CHEBI:16708"/>
        <dbReference type="ChEBI" id="CHEBI:43474"/>
        <dbReference type="ChEBI" id="CHEBI:68688"/>
        <dbReference type="ChEBI" id="CHEBI:456215"/>
        <dbReference type="EC" id="2.4.2.57"/>
    </reaction>
</comment>
<comment type="catalytic activity">
    <reaction evidence="1">
        <text>CMP + phosphate = cytosine + alpha-D-ribose 1,5-bisphosphate</text>
        <dbReference type="Rhea" id="RHEA:36987"/>
        <dbReference type="ChEBI" id="CHEBI:16040"/>
        <dbReference type="ChEBI" id="CHEBI:43474"/>
        <dbReference type="ChEBI" id="CHEBI:60377"/>
        <dbReference type="ChEBI" id="CHEBI:68688"/>
        <dbReference type="EC" id="2.4.2.57"/>
    </reaction>
</comment>
<comment type="catalytic activity">
    <reaction evidence="1">
        <text>UMP + phosphate = alpha-D-ribose 1,5-bisphosphate + uracil</text>
        <dbReference type="Rhea" id="RHEA:36991"/>
        <dbReference type="ChEBI" id="CHEBI:17568"/>
        <dbReference type="ChEBI" id="CHEBI:43474"/>
        <dbReference type="ChEBI" id="CHEBI:57865"/>
        <dbReference type="ChEBI" id="CHEBI:68688"/>
        <dbReference type="EC" id="2.4.2.57"/>
    </reaction>
</comment>
<comment type="similarity">
    <text evidence="1">Belongs to the thymidine/pyrimidine-nucleoside phosphorylase family. Type 2 subfamily.</text>
</comment>
<comment type="sequence caution" evidence="2">
    <conflict type="erroneous initiation">
        <sequence resource="EMBL-CDS" id="ABL77503"/>
    </conflict>
</comment>
<evidence type="ECO:0000255" key="1">
    <source>
        <dbReference type="HAMAP-Rule" id="MF_02132"/>
    </source>
</evidence>
<evidence type="ECO:0000305" key="2"/>
<protein>
    <recommendedName>
        <fullName evidence="1">AMP phosphorylase</fullName>
        <shortName evidence="1">AMPpase</shortName>
        <ecNumber evidence="1">2.4.2.57</ecNumber>
    </recommendedName>
    <alternativeName>
        <fullName evidence="1">Nucleoside monophosphate phosphorylase</fullName>
        <shortName evidence="1">NMP phosphorylase</shortName>
    </alternativeName>
</protein>
<accession>A1RWC3</accession>
<organism>
    <name type="scientific">Thermofilum pendens (strain DSM 2475 / Hrk 5)</name>
    <dbReference type="NCBI Taxonomy" id="368408"/>
    <lineage>
        <taxon>Archaea</taxon>
        <taxon>Thermoproteota</taxon>
        <taxon>Thermoprotei</taxon>
        <taxon>Thermofilales</taxon>
        <taxon>Thermofilaceae</taxon>
        <taxon>Thermofilum</taxon>
    </lineage>
</organism>
<name>AMPPA_THEPD</name>